<proteinExistence type="evidence at protein level"/>
<gene>
    <name type="primary">primo-1</name>
    <name type="ORF">CG31311</name>
</gene>
<sequence>MVRKVLMICLGNICRSPIAEVVMVDTLEKANVKDVEVDSAAIGGWHVGNRADPRAISTLQKHGLKCTHIVRQIRKQDFSEFDYIFGMDEDNMSELRRLAPKGSKAELLMLGDFGLEKKNRIIEDPYYERGAEGFETAYQQCVVACAAFMKERLQK</sequence>
<evidence type="ECO:0000250" key="1"/>
<evidence type="ECO:0000250" key="2">
    <source>
        <dbReference type="UniProtKB" id="P11064"/>
    </source>
</evidence>
<evidence type="ECO:0000269" key="3">
    <source>
    </source>
</evidence>
<evidence type="ECO:0000305" key="4"/>
<evidence type="ECO:0007829" key="5">
    <source>
        <dbReference type="PDB" id="7CUY"/>
    </source>
</evidence>
<feature type="chain" id="PRO_0000046562" description="Low molecular weight phosphotyrosine protein phosphatase 1">
    <location>
        <begin position="1"/>
        <end position="155"/>
    </location>
</feature>
<feature type="active site" description="Nucleophile" evidence="2">
    <location>
        <position position="9"/>
    </location>
</feature>
<feature type="active site" evidence="2">
    <location>
        <position position="15"/>
    </location>
</feature>
<feature type="active site" description="Proton donor" evidence="2">
    <location>
        <position position="124"/>
    </location>
</feature>
<feature type="strand" evidence="5">
    <location>
        <begin position="3"/>
        <end position="14"/>
    </location>
</feature>
<feature type="helix" evidence="5">
    <location>
        <begin position="15"/>
        <end position="29"/>
    </location>
</feature>
<feature type="strand" evidence="5">
    <location>
        <begin position="34"/>
        <end position="43"/>
    </location>
</feature>
<feature type="turn" evidence="5">
    <location>
        <begin position="45"/>
        <end position="48"/>
    </location>
</feature>
<feature type="helix" evidence="5">
    <location>
        <begin position="53"/>
        <end position="61"/>
    </location>
</feature>
<feature type="helix" evidence="5">
    <location>
        <begin position="77"/>
        <end position="80"/>
    </location>
</feature>
<feature type="strand" evidence="5">
    <location>
        <begin position="82"/>
        <end position="88"/>
    </location>
</feature>
<feature type="helix" evidence="5">
    <location>
        <begin position="89"/>
        <end position="98"/>
    </location>
</feature>
<feature type="strand" evidence="5">
    <location>
        <begin position="106"/>
        <end position="109"/>
    </location>
</feature>
<feature type="helix" evidence="5">
    <location>
        <begin position="110"/>
        <end position="112"/>
    </location>
</feature>
<feature type="strand" evidence="5">
    <location>
        <begin position="113"/>
        <end position="115"/>
    </location>
</feature>
<feature type="helix" evidence="5">
    <location>
        <begin position="117"/>
        <end position="119"/>
    </location>
</feature>
<feature type="strand" evidence="5">
    <location>
        <begin position="128"/>
        <end position="131"/>
    </location>
</feature>
<feature type="helix" evidence="5">
    <location>
        <begin position="132"/>
        <end position="151"/>
    </location>
</feature>
<name>PPAC1_DROME</name>
<dbReference type="EC" id="3.1.3.48"/>
<dbReference type="EC" id="3.1.3.2"/>
<dbReference type="EMBL" id="AE014297">
    <property type="protein sequence ID" value="AAN13591.2"/>
    <property type="molecule type" value="Genomic_DNA"/>
</dbReference>
<dbReference type="EMBL" id="AE014297">
    <property type="protein sequence ID" value="AAO41564.1"/>
    <property type="molecule type" value="Genomic_DNA"/>
</dbReference>
<dbReference type="RefSeq" id="NP_001027186.1">
    <property type="nucleotide sequence ID" value="NM_001032015.2"/>
</dbReference>
<dbReference type="RefSeq" id="NP_001027187.1">
    <property type="nucleotide sequence ID" value="NM_001032016.2"/>
</dbReference>
<dbReference type="PDB" id="7CUY">
    <property type="method" value="X-ray"/>
    <property type="resolution" value="2.08 A"/>
    <property type="chains" value="A/B=1-155"/>
</dbReference>
<dbReference type="PDBsum" id="7CUY"/>
<dbReference type="SMR" id="P82890"/>
<dbReference type="BioGRID" id="533776">
    <property type="interactions" value="1"/>
</dbReference>
<dbReference type="FunCoup" id="P82890">
    <property type="interactions" value="2054"/>
</dbReference>
<dbReference type="STRING" id="7227.FBpp0099893"/>
<dbReference type="PaxDb" id="7227-FBpp0099893"/>
<dbReference type="DNASU" id="3772179"/>
<dbReference type="EnsemblMetazoa" id="FBtr0091747">
    <property type="protein sequence ID" value="FBpp0099893"/>
    <property type="gene ID" value="FBgn0040077"/>
</dbReference>
<dbReference type="EnsemblMetazoa" id="FBtr0091748">
    <property type="protein sequence ID" value="FBpp0099895"/>
    <property type="gene ID" value="FBgn0040077"/>
</dbReference>
<dbReference type="GeneID" id="3772179"/>
<dbReference type="KEGG" id="dme:Dmel_CG33748"/>
<dbReference type="UCSC" id="CG33748-RA">
    <property type="organism name" value="d. melanogaster"/>
</dbReference>
<dbReference type="AGR" id="FB:FBgn0040077"/>
<dbReference type="CTD" id="3772179"/>
<dbReference type="FlyBase" id="FBgn0040077">
    <property type="gene designation" value="primo-1"/>
</dbReference>
<dbReference type="VEuPathDB" id="VectorBase:FBgn0040077"/>
<dbReference type="eggNOG" id="KOG3217">
    <property type="taxonomic scope" value="Eukaryota"/>
</dbReference>
<dbReference type="GeneTree" id="ENSGT00940000167505"/>
<dbReference type="HOGENOM" id="CLU_071415_2_0_1"/>
<dbReference type="InParanoid" id="P82890"/>
<dbReference type="OMA" id="VCHGNIC"/>
<dbReference type="OrthoDB" id="3388at2759"/>
<dbReference type="PhylomeDB" id="P82890"/>
<dbReference type="BioGRID-ORCS" id="3772179">
    <property type="hits" value="0 hits in 3 CRISPR screens"/>
</dbReference>
<dbReference type="GenomeRNAi" id="3772179"/>
<dbReference type="PRO" id="PR:P82890"/>
<dbReference type="Proteomes" id="UP000000803">
    <property type="component" value="Chromosome 3R"/>
</dbReference>
<dbReference type="Bgee" id="FBgn0040077">
    <property type="expression patterns" value="Expressed in seminal fluid secreting gland and 14 other cell types or tissues"/>
</dbReference>
<dbReference type="GO" id="GO:0005737">
    <property type="term" value="C:cytoplasm"/>
    <property type="evidence" value="ECO:0000250"/>
    <property type="project" value="FlyBase"/>
</dbReference>
<dbReference type="GO" id="GO:0005634">
    <property type="term" value="C:nucleus"/>
    <property type="evidence" value="ECO:0000250"/>
    <property type="project" value="FlyBase"/>
</dbReference>
<dbReference type="GO" id="GO:0003993">
    <property type="term" value="F:acid phosphatase activity"/>
    <property type="evidence" value="ECO:0007669"/>
    <property type="project" value="UniProtKB-EC"/>
</dbReference>
<dbReference type="GO" id="GO:0004726">
    <property type="term" value="F:non-membrane spanning protein tyrosine phosphatase activity"/>
    <property type="evidence" value="ECO:0007669"/>
    <property type="project" value="InterPro"/>
</dbReference>
<dbReference type="GO" id="GO:0004725">
    <property type="term" value="F:protein tyrosine phosphatase activity"/>
    <property type="evidence" value="ECO:0000314"/>
    <property type="project" value="FlyBase"/>
</dbReference>
<dbReference type="CDD" id="cd16343">
    <property type="entry name" value="LMWPTP"/>
    <property type="match status" value="1"/>
</dbReference>
<dbReference type="FunFam" id="3.40.50.2300:FF:000105">
    <property type="entry name" value="Low molecular weight phosphotyrosine protein"/>
    <property type="match status" value="1"/>
</dbReference>
<dbReference type="Gene3D" id="3.40.50.2300">
    <property type="match status" value="1"/>
</dbReference>
<dbReference type="InterPro" id="IPR050438">
    <property type="entry name" value="LMW_PTPase"/>
</dbReference>
<dbReference type="InterPro" id="IPR023485">
    <property type="entry name" value="Ptyr_pPase"/>
</dbReference>
<dbReference type="InterPro" id="IPR036196">
    <property type="entry name" value="Ptyr_pPase_sf"/>
</dbReference>
<dbReference type="InterPro" id="IPR002115">
    <property type="entry name" value="Tyr_Pase_low_mol_wt_mml"/>
</dbReference>
<dbReference type="InterPro" id="IPR017867">
    <property type="entry name" value="Tyr_phospatase_low_mol_wt"/>
</dbReference>
<dbReference type="PANTHER" id="PTHR11717:SF7">
    <property type="entry name" value="LOW MOLECULAR WEIGHT PHOSPHOTYROSINE PROTEIN PHOSPHATASE"/>
    <property type="match status" value="1"/>
</dbReference>
<dbReference type="PANTHER" id="PTHR11717">
    <property type="entry name" value="LOW MOLECULAR WEIGHT PROTEIN TYROSINE PHOSPHATASE"/>
    <property type="match status" value="1"/>
</dbReference>
<dbReference type="Pfam" id="PF01451">
    <property type="entry name" value="LMWPc"/>
    <property type="match status" value="1"/>
</dbReference>
<dbReference type="PRINTS" id="PR00719">
    <property type="entry name" value="LMWPTPASE"/>
</dbReference>
<dbReference type="PRINTS" id="PR00720">
    <property type="entry name" value="MAMMALPTPASE"/>
</dbReference>
<dbReference type="SMART" id="SM00226">
    <property type="entry name" value="LMWPc"/>
    <property type="match status" value="1"/>
</dbReference>
<dbReference type="SUPFAM" id="SSF52788">
    <property type="entry name" value="Phosphotyrosine protein phosphatases I"/>
    <property type="match status" value="1"/>
</dbReference>
<reference key="1">
    <citation type="journal article" date="2000" name="Gene">
        <title>The Drosophila primo locus encodes two low-molecular-weight tyrosine phosphatases.</title>
        <authorList>
            <person name="Miller D.T."/>
            <person name="Read R."/>
            <person name="Rusconi J."/>
            <person name="Cagan R.L."/>
        </authorList>
    </citation>
    <scope>NUCLEOTIDE SEQUENCE [GENOMIC DNA]</scope>
    <scope>TISSUE SPECIFICITY</scope>
    <scope>DEVELOPMENTAL STAGE</scope>
    <source>
        <tissue>Embryo</tissue>
        <tissue>Pupae</tissue>
    </source>
</reference>
<reference key="2">
    <citation type="journal article" date="2000" name="Science">
        <title>The genome sequence of Drosophila melanogaster.</title>
        <authorList>
            <person name="Adams M.D."/>
            <person name="Celniker S.E."/>
            <person name="Holt R.A."/>
            <person name="Evans C.A."/>
            <person name="Gocayne J.D."/>
            <person name="Amanatides P.G."/>
            <person name="Scherer S.E."/>
            <person name="Li P.W."/>
            <person name="Hoskins R.A."/>
            <person name="Galle R.F."/>
            <person name="George R.A."/>
            <person name="Lewis S.E."/>
            <person name="Richards S."/>
            <person name="Ashburner M."/>
            <person name="Henderson S.N."/>
            <person name="Sutton G.G."/>
            <person name="Wortman J.R."/>
            <person name="Yandell M.D."/>
            <person name="Zhang Q."/>
            <person name="Chen L.X."/>
            <person name="Brandon R.C."/>
            <person name="Rogers Y.-H.C."/>
            <person name="Blazej R.G."/>
            <person name="Champe M."/>
            <person name="Pfeiffer B.D."/>
            <person name="Wan K.H."/>
            <person name="Doyle C."/>
            <person name="Baxter E.G."/>
            <person name="Helt G."/>
            <person name="Nelson C.R."/>
            <person name="Miklos G.L.G."/>
            <person name="Abril J.F."/>
            <person name="Agbayani A."/>
            <person name="An H.-J."/>
            <person name="Andrews-Pfannkoch C."/>
            <person name="Baldwin D."/>
            <person name="Ballew R.M."/>
            <person name="Basu A."/>
            <person name="Baxendale J."/>
            <person name="Bayraktaroglu L."/>
            <person name="Beasley E.M."/>
            <person name="Beeson K.Y."/>
            <person name="Benos P.V."/>
            <person name="Berman B.P."/>
            <person name="Bhandari D."/>
            <person name="Bolshakov S."/>
            <person name="Borkova D."/>
            <person name="Botchan M.R."/>
            <person name="Bouck J."/>
            <person name="Brokstein P."/>
            <person name="Brottier P."/>
            <person name="Burtis K.C."/>
            <person name="Busam D.A."/>
            <person name="Butler H."/>
            <person name="Cadieu E."/>
            <person name="Center A."/>
            <person name="Chandra I."/>
            <person name="Cherry J.M."/>
            <person name="Cawley S."/>
            <person name="Dahlke C."/>
            <person name="Davenport L.B."/>
            <person name="Davies P."/>
            <person name="de Pablos B."/>
            <person name="Delcher A."/>
            <person name="Deng Z."/>
            <person name="Mays A.D."/>
            <person name="Dew I."/>
            <person name="Dietz S.M."/>
            <person name="Dodson K."/>
            <person name="Doup L.E."/>
            <person name="Downes M."/>
            <person name="Dugan-Rocha S."/>
            <person name="Dunkov B.C."/>
            <person name="Dunn P."/>
            <person name="Durbin K.J."/>
            <person name="Evangelista C.C."/>
            <person name="Ferraz C."/>
            <person name="Ferriera S."/>
            <person name="Fleischmann W."/>
            <person name="Fosler C."/>
            <person name="Gabrielian A.E."/>
            <person name="Garg N.S."/>
            <person name="Gelbart W.M."/>
            <person name="Glasser K."/>
            <person name="Glodek A."/>
            <person name="Gong F."/>
            <person name="Gorrell J.H."/>
            <person name="Gu Z."/>
            <person name="Guan P."/>
            <person name="Harris M."/>
            <person name="Harris N.L."/>
            <person name="Harvey D.A."/>
            <person name="Heiman T.J."/>
            <person name="Hernandez J.R."/>
            <person name="Houck J."/>
            <person name="Hostin D."/>
            <person name="Houston K.A."/>
            <person name="Howland T.J."/>
            <person name="Wei M.-H."/>
            <person name="Ibegwam C."/>
            <person name="Jalali M."/>
            <person name="Kalush F."/>
            <person name="Karpen G.H."/>
            <person name="Ke Z."/>
            <person name="Kennison J.A."/>
            <person name="Ketchum K.A."/>
            <person name="Kimmel B.E."/>
            <person name="Kodira C.D."/>
            <person name="Kraft C.L."/>
            <person name="Kravitz S."/>
            <person name="Kulp D."/>
            <person name="Lai Z."/>
            <person name="Lasko P."/>
            <person name="Lei Y."/>
            <person name="Levitsky A.A."/>
            <person name="Li J.H."/>
            <person name="Li Z."/>
            <person name="Liang Y."/>
            <person name="Lin X."/>
            <person name="Liu X."/>
            <person name="Mattei B."/>
            <person name="McIntosh T.C."/>
            <person name="McLeod M.P."/>
            <person name="McPherson D."/>
            <person name="Merkulov G."/>
            <person name="Milshina N.V."/>
            <person name="Mobarry C."/>
            <person name="Morris J."/>
            <person name="Moshrefi A."/>
            <person name="Mount S.M."/>
            <person name="Moy M."/>
            <person name="Murphy B."/>
            <person name="Murphy L."/>
            <person name="Muzny D.M."/>
            <person name="Nelson D.L."/>
            <person name="Nelson D.R."/>
            <person name="Nelson K.A."/>
            <person name="Nixon K."/>
            <person name="Nusskern D.R."/>
            <person name="Pacleb J.M."/>
            <person name="Palazzolo M."/>
            <person name="Pittman G.S."/>
            <person name="Pan S."/>
            <person name="Pollard J."/>
            <person name="Puri V."/>
            <person name="Reese M.G."/>
            <person name="Reinert K."/>
            <person name="Remington K."/>
            <person name="Saunders R.D.C."/>
            <person name="Scheeler F."/>
            <person name="Shen H."/>
            <person name="Shue B.C."/>
            <person name="Siden-Kiamos I."/>
            <person name="Simpson M."/>
            <person name="Skupski M.P."/>
            <person name="Smith T.J."/>
            <person name="Spier E."/>
            <person name="Spradling A.C."/>
            <person name="Stapleton M."/>
            <person name="Strong R."/>
            <person name="Sun E."/>
            <person name="Svirskas R."/>
            <person name="Tector C."/>
            <person name="Turner R."/>
            <person name="Venter E."/>
            <person name="Wang A.H."/>
            <person name="Wang X."/>
            <person name="Wang Z.-Y."/>
            <person name="Wassarman D.A."/>
            <person name="Weinstock G.M."/>
            <person name="Weissenbach J."/>
            <person name="Williams S.M."/>
            <person name="Woodage T."/>
            <person name="Worley K.C."/>
            <person name="Wu D."/>
            <person name="Yang S."/>
            <person name="Yao Q.A."/>
            <person name="Ye J."/>
            <person name="Yeh R.-F."/>
            <person name="Zaveri J.S."/>
            <person name="Zhan M."/>
            <person name="Zhang G."/>
            <person name="Zhao Q."/>
            <person name="Zheng L."/>
            <person name="Zheng X.H."/>
            <person name="Zhong F.N."/>
            <person name="Zhong W."/>
            <person name="Zhou X."/>
            <person name="Zhu S.C."/>
            <person name="Zhu X."/>
            <person name="Smith H.O."/>
            <person name="Gibbs R.A."/>
            <person name="Myers E.W."/>
            <person name="Rubin G.M."/>
            <person name="Venter J.C."/>
        </authorList>
    </citation>
    <scope>NUCLEOTIDE SEQUENCE [LARGE SCALE GENOMIC DNA]</scope>
    <source>
        <strain>Berkeley</strain>
    </source>
</reference>
<reference key="3">
    <citation type="journal article" date="2002" name="Genome Biol.">
        <title>Annotation of the Drosophila melanogaster euchromatic genome: a systematic review.</title>
        <authorList>
            <person name="Misra S."/>
            <person name="Crosby M.A."/>
            <person name="Mungall C.J."/>
            <person name="Matthews B.B."/>
            <person name="Campbell K.S."/>
            <person name="Hradecky P."/>
            <person name="Huang Y."/>
            <person name="Kaminker J.S."/>
            <person name="Millburn G.H."/>
            <person name="Prochnik S.E."/>
            <person name="Smith C.D."/>
            <person name="Tupy J.L."/>
            <person name="Whitfield E.J."/>
            <person name="Bayraktaroglu L."/>
            <person name="Berman B.P."/>
            <person name="Bettencourt B.R."/>
            <person name="Celniker S.E."/>
            <person name="de Grey A.D.N.J."/>
            <person name="Drysdale R.A."/>
            <person name="Harris N.L."/>
            <person name="Richter J."/>
            <person name="Russo S."/>
            <person name="Schroeder A.J."/>
            <person name="Shu S.Q."/>
            <person name="Stapleton M."/>
            <person name="Yamada C."/>
            <person name="Ashburner M."/>
            <person name="Gelbart W.M."/>
            <person name="Rubin G.M."/>
            <person name="Lewis S.E."/>
        </authorList>
    </citation>
    <scope>GENOME REANNOTATION</scope>
    <source>
        <strain>Berkeley</strain>
    </source>
</reference>
<accession>P82890</accession>
<accession>A4V2V3</accession>
<accession>Q9VFR9</accession>
<organism>
    <name type="scientific">Drosophila melanogaster</name>
    <name type="common">Fruit fly</name>
    <dbReference type="NCBI Taxonomy" id="7227"/>
    <lineage>
        <taxon>Eukaryota</taxon>
        <taxon>Metazoa</taxon>
        <taxon>Ecdysozoa</taxon>
        <taxon>Arthropoda</taxon>
        <taxon>Hexapoda</taxon>
        <taxon>Insecta</taxon>
        <taxon>Pterygota</taxon>
        <taxon>Neoptera</taxon>
        <taxon>Endopterygota</taxon>
        <taxon>Diptera</taxon>
        <taxon>Brachycera</taxon>
        <taxon>Muscomorpha</taxon>
        <taxon>Ephydroidea</taxon>
        <taxon>Drosophilidae</taxon>
        <taxon>Drosophila</taxon>
        <taxon>Sophophora</taxon>
    </lineage>
</organism>
<protein>
    <recommendedName>
        <fullName>Low molecular weight phosphotyrosine protein phosphatase 1</fullName>
        <ecNumber>3.1.3.48</ecNumber>
    </recommendedName>
    <alternativeName>
        <fullName>Low molecular weight cytosolic acid phosphatase 1</fullName>
        <ecNumber>3.1.3.2</ecNumber>
    </alternativeName>
    <alternativeName>
        <fullName>PTPase 1</fullName>
    </alternativeName>
</protein>
<keyword id="KW-0002">3D-structure</keyword>
<keyword id="KW-0963">Cytoplasm</keyword>
<keyword id="KW-0378">Hydrolase</keyword>
<keyword id="KW-0904">Protein phosphatase</keyword>
<keyword id="KW-1185">Reference proteome</keyword>
<comment type="function">
    <text evidence="1">Acts on tyrosine phosphorylated proteins, low-MW aryl phosphates and natural and synthetic acyl phosphates.</text>
</comment>
<comment type="catalytic activity">
    <reaction>
        <text>O-phospho-L-tyrosyl-[protein] + H2O = L-tyrosyl-[protein] + phosphate</text>
        <dbReference type="Rhea" id="RHEA:10684"/>
        <dbReference type="Rhea" id="RHEA-COMP:10136"/>
        <dbReference type="Rhea" id="RHEA-COMP:20101"/>
        <dbReference type="ChEBI" id="CHEBI:15377"/>
        <dbReference type="ChEBI" id="CHEBI:43474"/>
        <dbReference type="ChEBI" id="CHEBI:46858"/>
        <dbReference type="ChEBI" id="CHEBI:61978"/>
        <dbReference type="EC" id="3.1.3.48"/>
    </reaction>
</comment>
<comment type="catalytic activity">
    <reaction>
        <text>a phosphate monoester + H2O = an alcohol + phosphate</text>
        <dbReference type="Rhea" id="RHEA:15017"/>
        <dbReference type="ChEBI" id="CHEBI:15377"/>
        <dbReference type="ChEBI" id="CHEBI:30879"/>
        <dbReference type="ChEBI" id="CHEBI:43474"/>
        <dbReference type="ChEBI" id="CHEBI:67140"/>
        <dbReference type="EC" id="3.1.3.2"/>
    </reaction>
</comment>
<comment type="subcellular location">
    <subcellularLocation>
        <location>Cytoplasm</location>
    </subcellularLocation>
</comment>
<comment type="tissue specificity">
    <text evidence="3">Cone cells and primary pigment cells in developing pupal retina.</text>
</comment>
<comment type="developmental stage">
    <text evidence="3">Larvae, pupae and adults.</text>
</comment>
<comment type="similarity">
    <text evidence="4">Belongs to the low molecular weight phosphotyrosine protein phosphatase family.</text>
</comment>